<accession>Q5T1A1</accession>
<accession>Q2M2R2</accession>
<accession>Q8N810</accession>
<accession>Q96M03</accession>
<sequence>MPKVMKDVVHPLGGEEPSMARAVVRSVGGFTLGLSLATAYGLLELLVEGHSPWGCLVGTLTLAAFLSLGMGFSRQVRATVLLLLPQAFSRQGRTLLLVAAFGLVLQGPCANTLRNFTRASEAVACGAELALNQTAEVLQRAKQPLVSALNKIKAIARKTKEVADRVRKFFRSIMDGVKHIARALRNVWQWLLHIGDVCNSELGNPYLKCARVFDDAKDSCMMVIPQAYHLCYVLMPFKLALCGLASLVQVFCVIPKYIQPFLRQTIGTPVIQLLNRVRQEFEFNMTATHHFSVDLNASRSLSQVAMDLHEAVSMKLHRVREALALMGFTTPLLLVLLYLQALFYRYCYLNWDHYDNIYITSRFLRMEAVRSTAGLPTVLPLSAHEARRYIPPGSIFLSQWEKFFYILETFNLIRHLLLVLFLVFLDYAVFWVLDLARHQLQGEIVARSPVLVSLTVEGTGYAGNIYRDLVSAFDVLQQGNISILSRRCLLRPSEPDSTGYIVIGVMYGLCFFITLFGSYVSRLRRVICASYYPSREQERISYLYNVLLSRRTNLLAALHRSVRRRAADQGHRSAFLVLASRCPCLGPFVSHFWLHQAYCLGCGQPQDEGDMENTVSCSTPGCQGLYCLTCFRLLDNTCSVCASPLSYQGDLDLELDSSDEEGPQLWLAAAQRKDPEQAWLLQQQLQEVLGRSLSMESTSESSDLDEEKGPQQRKHGQQPLPEAHQPVSILTSPEPHRPPETSSATKGAPTPASEPSVPLSPPSLPDPSHPPPK</sequence>
<keyword id="KW-0025">Alternative splicing</keyword>
<keyword id="KW-0968">Cytoplasmic vesicle</keyword>
<keyword id="KW-0325">Glycoprotein</keyword>
<keyword id="KW-0472">Membrane</keyword>
<keyword id="KW-1267">Proteomics identification</keyword>
<keyword id="KW-1185">Reference proteome</keyword>
<keyword id="KW-0812">Transmembrane</keyword>
<keyword id="KW-1133">Transmembrane helix</keyword>
<organism>
    <name type="scientific">Homo sapiens</name>
    <name type="common">Human</name>
    <dbReference type="NCBI Taxonomy" id="9606"/>
    <lineage>
        <taxon>Eukaryota</taxon>
        <taxon>Metazoa</taxon>
        <taxon>Chordata</taxon>
        <taxon>Craniata</taxon>
        <taxon>Vertebrata</taxon>
        <taxon>Euteleostomi</taxon>
        <taxon>Mammalia</taxon>
        <taxon>Eutheria</taxon>
        <taxon>Euarchontoglires</taxon>
        <taxon>Primates</taxon>
        <taxon>Haplorrhini</taxon>
        <taxon>Catarrhini</taxon>
        <taxon>Hominidae</taxon>
        <taxon>Homo</taxon>
    </lineage>
</organism>
<protein>
    <recommendedName>
        <fullName>DC-STAMP domain-containing protein 2</fullName>
    </recommendedName>
</protein>
<name>DCST2_HUMAN</name>
<feature type="chain" id="PRO_0000278826" description="DC-STAMP domain-containing protein 2">
    <location>
        <begin position="1"/>
        <end position="773"/>
    </location>
</feature>
<feature type="topological domain" description="Cytoplasmic" evidence="2">
    <location>
        <begin position="1"/>
        <end position="26"/>
    </location>
</feature>
<feature type="transmembrane region" description="Helical" evidence="2">
    <location>
        <begin position="27"/>
        <end position="47"/>
    </location>
</feature>
<feature type="topological domain" description="Extracellular" evidence="2">
    <location>
        <begin position="48"/>
        <end position="51"/>
    </location>
</feature>
<feature type="transmembrane region" description="Helical" evidence="2">
    <location>
        <begin position="52"/>
        <end position="72"/>
    </location>
</feature>
<feature type="topological domain" description="Cytoplasmic" evidence="2">
    <location>
        <begin position="73"/>
        <end position="233"/>
    </location>
</feature>
<feature type="transmembrane region" description="Helical" evidence="2">
    <location>
        <begin position="234"/>
        <end position="254"/>
    </location>
</feature>
<feature type="topological domain" description="Extracellular" evidence="2">
    <location>
        <begin position="255"/>
        <end position="322"/>
    </location>
</feature>
<feature type="transmembrane region" description="Helical" evidence="2">
    <location>
        <begin position="323"/>
        <end position="343"/>
    </location>
</feature>
<feature type="topological domain" description="Cytoplasmic" evidence="2">
    <location>
        <begin position="344"/>
        <end position="415"/>
    </location>
</feature>
<feature type="transmembrane region" description="Helical" evidence="2">
    <location>
        <begin position="416"/>
        <end position="436"/>
    </location>
</feature>
<feature type="topological domain" description="Extracellular" evidence="2">
    <location>
        <begin position="437"/>
        <end position="499"/>
    </location>
</feature>
<feature type="transmembrane region" description="Helical" evidence="2">
    <location>
        <begin position="500"/>
        <end position="520"/>
    </location>
</feature>
<feature type="topological domain" description="Cytoplasmic" evidence="2">
    <location>
        <begin position="521"/>
        <end position="773"/>
    </location>
</feature>
<feature type="region of interest" description="Disordered" evidence="3">
    <location>
        <begin position="692"/>
        <end position="773"/>
    </location>
</feature>
<feature type="compositionally biased region" description="Low complexity" evidence="3">
    <location>
        <begin position="692"/>
        <end position="701"/>
    </location>
</feature>
<feature type="compositionally biased region" description="Pro residues" evidence="3">
    <location>
        <begin position="758"/>
        <end position="773"/>
    </location>
</feature>
<feature type="glycosylation site" description="N-linked (GlcNAc...) asparagine" evidence="2">
    <location>
        <position position="284"/>
    </location>
</feature>
<feature type="glycosylation site" description="N-linked (GlcNAc...) asparagine" evidence="2">
    <location>
        <position position="296"/>
    </location>
</feature>
<feature type="glycosylation site" description="N-linked (GlcNAc...) asparagine" evidence="2">
    <location>
        <position position="480"/>
    </location>
</feature>
<feature type="splice variant" id="VSP_023408" description="In isoform 2." evidence="4">
    <original>LYCLTCFRLLDNTCS</original>
    <variation>FICKWHCSSSLVCTP</variation>
    <location>
        <begin position="625"/>
        <end position="639"/>
    </location>
</feature>
<feature type="splice variant" id="VSP_023409" description="In isoform 2." evidence="4">
    <location>
        <begin position="640"/>
        <end position="773"/>
    </location>
</feature>
<dbReference type="EMBL" id="AK057496">
    <property type="protein sequence ID" value="BAB71511.1"/>
    <property type="molecule type" value="mRNA"/>
</dbReference>
<dbReference type="EMBL" id="AK097468">
    <property type="protein sequence ID" value="BAC05065.1"/>
    <property type="status" value="ALT_SEQ"/>
    <property type="molecule type" value="mRNA"/>
</dbReference>
<dbReference type="EMBL" id="AL451085">
    <property type="status" value="NOT_ANNOTATED_CDS"/>
    <property type="molecule type" value="Genomic_DNA"/>
</dbReference>
<dbReference type="EMBL" id="BC111794">
    <property type="protein sequence ID" value="AAI11795.1"/>
    <property type="molecule type" value="mRNA"/>
</dbReference>
<dbReference type="CCDS" id="CCDS1082.2">
    <molecule id="Q5T1A1-1"/>
</dbReference>
<dbReference type="RefSeq" id="NP_653223.2">
    <molecule id="Q5T1A1-1"/>
    <property type="nucleotide sequence ID" value="NM_144622.3"/>
</dbReference>
<dbReference type="RefSeq" id="XP_047301527.1">
    <molecule id="Q5T1A1-2"/>
    <property type="nucleotide sequence ID" value="XM_047445571.1"/>
</dbReference>
<dbReference type="RefSeq" id="XP_054190320.1">
    <molecule id="Q5T1A1-2"/>
    <property type="nucleotide sequence ID" value="XM_054334345.1"/>
</dbReference>
<dbReference type="SMR" id="Q5T1A1"/>
<dbReference type="BioGRID" id="126069">
    <property type="interactions" value="2"/>
</dbReference>
<dbReference type="FunCoup" id="Q5T1A1">
    <property type="interactions" value="3"/>
</dbReference>
<dbReference type="STRING" id="9606.ENSP00000357409"/>
<dbReference type="GlyCosmos" id="Q5T1A1">
    <property type="glycosylation" value="3 sites, No reported glycans"/>
</dbReference>
<dbReference type="GlyGen" id="Q5T1A1">
    <property type="glycosylation" value="5 sites"/>
</dbReference>
<dbReference type="iPTMnet" id="Q5T1A1"/>
<dbReference type="PhosphoSitePlus" id="Q5T1A1"/>
<dbReference type="BioMuta" id="DCST2"/>
<dbReference type="DMDM" id="143975954"/>
<dbReference type="MassIVE" id="Q5T1A1"/>
<dbReference type="PaxDb" id="9606-ENSP00000357409"/>
<dbReference type="PeptideAtlas" id="Q5T1A1"/>
<dbReference type="ProteomicsDB" id="64250">
    <molecule id="Q5T1A1-1"/>
</dbReference>
<dbReference type="ProteomicsDB" id="64251">
    <molecule id="Q5T1A1-2"/>
</dbReference>
<dbReference type="Antibodypedia" id="68362">
    <property type="antibodies" value="10 antibodies from 5 providers"/>
</dbReference>
<dbReference type="DNASU" id="127579"/>
<dbReference type="Ensembl" id="ENST00000368424.4">
    <molecule id="Q5T1A1-1"/>
    <property type="protein sequence ID" value="ENSP00000357409.3"/>
    <property type="gene ID" value="ENSG00000163354.15"/>
</dbReference>
<dbReference type="Ensembl" id="ENST00000485982.5">
    <molecule id="Q5T1A1-2"/>
    <property type="protein sequence ID" value="ENSP00000436964.1"/>
    <property type="gene ID" value="ENSG00000163354.15"/>
</dbReference>
<dbReference type="GeneID" id="127579"/>
<dbReference type="KEGG" id="hsa:127579"/>
<dbReference type="MANE-Select" id="ENST00000368424.4">
    <property type="protein sequence ID" value="ENSP00000357409.3"/>
    <property type="RefSeq nucleotide sequence ID" value="NM_144622.3"/>
    <property type="RefSeq protein sequence ID" value="NP_653223.2"/>
</dbReference>
<dbReference type="UCSC" id="uc001fgm.4">
    <molecule id="Q5T1A1-1"/>
    <property type="organism name" value="human"/>
</dbReference>
<dbReference type="AGR" id="HGNC:26562"/>
<dbReference type="CTD" id="127579"/>
<dbReference type="DisGeNET" id="127579"/>
<dbReference type="GeneCards" id="DCST2"/>
<dbReference type="HGNC" id="HGNC:26562">
    <property type="gene designation" value="DCST2"/>
</dbReference>
<dbReference type="HPA" id="ENSG00000163354">
    <property type="expression patterns" value="Tissue enhanced (retina, skin)"/>
</dbReference>
<dbReference type="MIM" id="619861">
    <property type="type" value="gene"/>
</dbReference>
<dbReference type="neXtProt" id="NX_Q5T1A1"/>
<dbReference type="OpenTargets" id="ENSG00000163354"/>
<dbReference type="PharmGKB" id="PA142672006"/>
<dbReference type="VEuPathDB" id="HostDB:ENSG00000163354"/>
<dbReference type="eggNOG" id="KOG3726">
    <property type="taxonomic scope" value="Eukaryota"/>
</dbReference>
<dbReference type="GeneTree" id="ENSGT00940000153269"/>
<dbReference type="HOGENOM" id="CLU_015030_2_0_1"/>
<dbReference type="InParanoid" id="Q5T1A1"/>
<dbReference type="OMA" id="DAKDNCM"/>
<dbReference type="OrthoDB" id="6598372at2759"/>
<dbReference type="PAN-GO" id="Q5T1A1">
    <property type="GO annotations" value="0 GO annotations based on evolutionary models"/>
</dbReference>
<dbReference type="PhylomeDB" id="Q5T1A1"/>
<dbReference type="TreeFam" id="TF318254"/>
<dbReference type="PathwayCommons" id="Q5T1A1"/>
<dbReference type="BioGRID-ORCS" id="127579">
    <property type="hits" value="14 hits in 1142 CRISPR screens"/>
</dbReference>
<dbReference type="GenomeRNAi" id="127579"/>
<dbReference type="Pharos" id="Q5T1A1">
    <property type="development level" value="Tdark"/>
</dbReference>
<dbReference type="PRO" id="PR:Q5T1A1"/>
<dbReference type="Proteomes" id="UP000005640">
    <property type="component" value="Chromosome 1"/>
</dbReference>
<dbReference type="RNAct" id="Q5T1A1">
    <property type="molecule type" value="protein"/>
</dbReference>
<dbReference type="Bgee" id="ENSG00000163354">
    <property type="expression patterns" value="Expressed in right testis and 91 other cell types or tissues"/>
</dbReference>
<dbReference type="ExpressionAtlas" id="Q5T1A1">
    <property type="expression patterns" value="baseline and differential"/>
</dbReference>
<dbReference type="GO" id="GO:0002080">
    <property type="term" value="C:acrosomal membrane"/>
    <property type="evidence" value="ECO:0007669"/>
    <property type="project" value="UniProtKB-SubCell"/>
</dbReference>
<dbReference type="GO" id="GO:0007342">
    <property type="term" value="P:fusion of sperm to egg plasma membrane involved in single fertilization"/>
    <property type="evidence" value="ECO:0000250"/>
    <property type="project" value="UniProtKB"/>
</dbReference>
<dbReference type="GO" id="GO:0035036">
    <property type="term" value="P:sperm-egg recognition"/>
    <property type="evidence" value="ECO:0000250"/>
    <property type="project" value="UniProtKB"/>
</dbReference>
<dbReference type="InterPro" id="IPR051856">
    <property type="entry name" value="CSR-E3_Ligase_Protein"/>
</dbReference>
<dbReference type="InterPro" id="IPR012858">
    <property type="entry name" value="DC_STAMP-like"/>
</dbReference>
<dbReference type="PANTHER" id="PTHR21041:SF6">
    <property type="entry name" value="DC-STAMP DOMAIN-CONTAINING PROTEIN 2"/>
    <property type="match status" value="1"/>
</dbReference>
<dbReference type="PANTHER" id="PTHR21041">
    <property type="entry name" value="DENDRITIC CELL-SPECIFIC TRANSMEMBRANE PROTEIN"/>
    <property type="match status" value="1"/>
</dbReference>
<dbReference type="Pfam" id="PF07782">
    <property type="entry name" value="DC_STAMP"/>
    <property type="match status" value="1"/>
</dbReference>
<evidence type="ECO:0000250" key="1">
    <source>
        <dbReference type="UniProtKB" id="A0A140LIJ0"/>
    </source>
</evidence>
<evidence type="ECO:0000255" key="2"/>
<evidence type="ECO:0000256" key="3">
    <source>
        <dbReference type="SAM" id="MobiDB-lite"/>
    </source>
</evidence>
<evidence type="ECO:0000303" key="4">
    <source>
    </source>
</evidence>
<evidence type="ECO:0000305" key="5"/>
<reference key="1">
    <citation type="journal article" date="2004" name="Nat. Genet.">
        <title>Complete sequencing and characterization of 21,243 full-length human cDNAs.</title>
        <authorList>
            <person name="Ota T."/>
            <person name="Suzuki Y."/>
            <person name="Nishikawa T."/>
            <person name="Otsuki T."/>
            <person name="Sugiyama T."/>
            <person name="Irie R."/>
            <person name="Wakamatsu A."/>
            <person name="Hayashi K."/>
            <person name="Sato H."/>
            <person name="Nagai K."/>
            <person name="Kimura K."/>
            <person name="Makita H."/>
            <person name="Sekine M."/>
            <person name="Obayashi M."/>
            <person name="Nishi T."/>
            <person name="Shibahara T."/>
            <person name="Tanaka T."/>
            <person name="Ishii S."/>
            <person name="Yamamoto J."/>
            <person name="Saito K."/>
            <person name="Kawai Y."/>
            <person name="Isono Y."/>
            <person name="Nakamura Y."/>
            <person name="Nagahari K."/>
            <person name="Murakami K."/>
            <person name="Yasuda T."/>
            <person name="Iwayanagi T."/>
            <person name="Wagatsuma M."/>
            <person name="Shiratori A."/>
            <person name="Sudo H."/>
            <person name="Hosoiri T."/>
            <person name="Kaku Y."/>
            <person name="Kodaira H."/>
            <person name="Kondo H."/>
            <person name="Sugawara M."/>
            <person name="Takahashi M."/>
            <person name="Kanda K."/>
            <person name="Yokoi T."/>
            <person name="Furuya T."/>
            <person name="Kikkawa E."/>
            <person name="Omura Y."/>
            <person name="Abe K."/>
            <person name="Kamihara K."/>
            <person name="Katsuta N."/>
            <person name="Sato K."/>
            <person name="Tanikawa M."/>
            <person name="Yamazaki M."/>
            <person name="Ninomiya K."/>
            <person name="Ishibashi T."/>
            <person name="Yamashita H."/>
            <person name="Murakawa K."/>
            <person name="Fujimori K."/>
            <person name="Tanai H."/>
            <person name="Kimata M."/>
            <person name="Watanabe M."/>
            <person name="Hiraoka S."/>
            <person name="Chiba Y."/>
            <person name="Ishida S."/>
            <person name="Ono Y."/>
            <person name="Takiguchi S."/>
            <person name="Watanabe S."/>
            <person name="Yosida M."/>
            <person name="Hotuta T."/>
            <person name="Kusano J."/>
            <person name="Kanehori K."/>
            <person name="Takahashi-Fujii A."/>
            <person name="Hara H."/>
            <person name="Tanase T.-O."/>
            <person name="Nomura Y."/>
            <person name="Togiya S."/>
            <person name="Komai F."/>
            <person name="Hara R."/>
            <person name="Takeuchi K."/>
            <person name="Arita M."/>
            <person name="Imose N."/>
            <person name="Musashino K."/>
            <person name="Yuuki H."/>
            <person name="Oshima A."/>
            <person name="Sasaki N."/>
            <person name="Aotsuka S."/>
            <person name="Yoshikawa Y."/>
            <person name="Matsunawa H."/>
            <person name="Ichihara T."/>
            <person name="Shiohata N."/>
            <person name="Sano S."/>
            <person name="Moriya S."/>
            <person name="Momiyama H."/>
            <person name="Satoh N."/>
            <person name="Takami S."/>
            <person name="Terashima Y."/>
            <person name="Suzuki O."/>
            <person name="Nakagawa S."/>
            <person name="Senoh A."/>
            <person name="Mizoguchi H."/>
            <person name="Goto Y."/>
            <person name="Shimizu F."/>
            <person name="Wakebe H."/>
            <person name="Hishigaki H."/>
            <person name="Watanabe T."/>
            <person name="Sugiyama A."/>
            <person name="Takemoto M."/>
            <person name="Kawakami B."/>
            <person name="Yamazaki M."/>
            <person name="Watanabe K."/>
            <person name="Kumagai A."/>
            <person name="Itakura S."/>
            <person name="Fukuzumi Y."/>
            <person name="Fujimori Y."/>
            <person name="Komiyama M."/>
            <person name="Tashiro H."/>
            <person name="Tanigami A."/>
            <person name="Fujiwara T."/>
            <person name="Ono T."/>
            <person name="Yamada K."/>
            <person name="Fujii Y."/>
            <person name="Ozaki K."/>
            <person name="Hirao M."/>
            <person name="Ohmori Y."/>
            <person name="Kawabata A."/>
            <person name="Hikiji T."/>
            <person name="Kobatake N."/>
            <person name="Inagaki H."/>
            <person name="Ikema Y."/>
            <person name="Okamoto S."/>
            <person name="Okitani R."/>
            <person name="Kawakami T."/>
            <person name="Noguchi S."/>
            <person name="Itoh T."/>
            <person name="Shigeta K."/>
            <person name="Senba T."/>
            <person name="Matsumura K."/>
            <person name="Nakajima Y."/>
            <person name="Mizuno T."/>
            <person name="Morinaga M."/>
            <person name="Sasaki M."/>
            <person name="Togashi T."/>
            <person name="Oyama M."/>
            <person name="Hata H."/>
            <person name="Watanabe M."/>
            <person name="Komatsu T."/>
            <person name="Mizushima-Sugano J."/>
            <person name="Satoh T."/>
            <person name="Shirai Y."/>
            <person name="Takahashi Y."/>
            <person name="Nakagawa K."/>
            <person name="Okumura K."/>
            <person name="Nagase T."/>
            <person name="Nomura N."/>
            <person name="Kikuchi H."/>
            <person name="Masuho Y."/>
            <person name="Yamashita R."/>
            <person name="Nakai K."/>
            <person name="Yada T."/>
            <person name="Nakamura Y."/>
            <person name="Ohara O."/>
            <person name="Isogai T."/>
            <person name="Sugano S."/>
        </authorList>
    </citation>
    <scope>NUCLEOTIDE SEQUENCE [LARGE SCALE MRNA] (ISOFORM 2)</scope>
    <scope>NUCLEOTIDE SEQUENCE [LARGE SCALE MRNA] OF 170-773 (ISOFORM 1)</scope>
    <source>
        <tissue>Testis</tissue>
        <tissue>Thymus</tissue>
    </source>
</reference>
<reference key="2">
    <citation type="journal article" date="2006" name="Nature">
        <title>The DNA sequence and biological annotation of human chromosome 1.</title>
        <authorList>
            <person name="Gregory S.G."/>
            <person name="Barlow K.F."/>
            <person name="McLay K.E."/>
            <person name="Kaul R."/>
            <person name="Swarbreck D."/>
            <person name="Dunham A."/>
            <person name="Scott C.E."/>
            <person name="Howe K.L."/>
            <person name="Woodfine K."/>
            <person name="Spencer C.C.A."/>
            <person name="Jones M.C."/>
            <person name="Gillson C."/>
            <person name="Searle S."/>
            <person name="Zhou Y."/>
            <person name="Kokocinski F."/>
            <person name="McDonald L."/>
            <person name="Evans R."/>
            <person name="Phillips K."/>
            <person name="Atkinson A."/>
            <person name="Cooper R."/>
            <person name="Jones C."/>
            <person name="Hall R.E."/>
            <person name="Andrews T.D."/>
            <person name="Lloyd C."/>
            <person name="Ainscough R."/>
            <person name="Almeida J.P."/>
            <person name="Ambrose K.D."/>
            <person name="Anderson F."/>
            <person name="Andrew R.W."/>
            <person name="Ashwell R.I.S."/>
            <person name="Aubin K."/>
            <person name="Babbage A.K."/>
            <person name="Bagguley C.L."/>
            <person name="Bailey J."/>
            <person name="Beasley H."/>
            <person name="Bethel G."/>
            <person name="Bird C.P."/>
            <person name="Bray-Allen S."/>
            <person name="Brown J.Y."/>
            <person name="Brown A.J."/>
            <person name="Buckley D."/>
            <person name="Burton J."/>
            <person name="Bye J."/>
            <person name="Carder C."/>
            <person name="Chapman J.C."/>
            <person name="Clark S.Y."/>
            <person name="Clarke G."/>
            <person name="Clee C."/>
            <person name="Cobley V."/>
            <person name="Collier R.E."/>
            <person name="Corby N."/>
            <person name="Coville G.J."/>
            <person name="Davies J."/>
            <person name="Deadman R."/>
            <person name="Dunn M."/>
            <person name="Earthrowl M."/>
            <person name="Ellington A.G."/>
            <person name="Errington H."/>
            <person name="Frankish A."/>
            <person name="Frankland J."/>
            <person name="French L."/>
            <person name="Garner P."/>
            <person name="Garnett J."/>
            <person name="Gay L."/>
            <person name="Ghori M.R.J."/>
            <person name="Gibson R."/>
            <person name="Gilby L.M."/>
            <person name="Gillett W."/>
            <person name="Glithero R.J."/>
            <person name="Grafham D.V."/>
            <person name="Griffiths C."/>
            <person name="Griffiths-Jones S."/>
            <person name="Grocock R."/>
            <person name="Hammond S."/>
            <person name="Harrison E.S.I."/>
            <person name="Hart E."/>
            <person name="Haugen E."/>
            <person name="Heath P.D."/>
            <person name="Holmes S."/>
            <person name="Holt K."/>
            <person name="Howden P.J."/>
            <person name="Hunt A.R."/>
            <person name="Hunt S.E."/>
            <person name="Hunter G."/>
            <person name="Isherwood J."/>
            <person name="James R."/>
            <person name="Johnson C."/>
            <person name="Johnson D."/>
            <person name="Joy A."/>
            <person name="Kay M."/>
            <person name="Kershaw J.K."/>
            <person name="Kibukawa M."/>
            <person name="Kimberley A.M."/>
            <person name="King A."/>
            <person name="Knights A.J."/>
            <person name="Lad H."/>
            <person name="Laird G."/>
            <person name="Lawlor S."/>
            <person name="Leongamornlert D.A."/>
            <person name="Lloyd D.M."/>
            <person name="Loveland J."/>
            <person name="Lovell J."/>
            <person name="Lush M.J."/>
            <person name="Lyne R."/>
            <person name="Martin S."/>
            <person name="Mashreghi-Mohammadi M."/>
            <person name="Matthews L."/>
            <person name="Matthews N.S.W."/>
            <person name="McLaren S."/>
            <person name="Milne S."/>
            <person name="Mistry S."/>
            <person name="Moore M.J.F."/>
            <person name="Nickerson T."/>
            <person name="O'Dell C.N."/>
            <person name="Oliver K."/>
            <person name="Palmeiri A."/>
            <person name="Palmer S.A."/>
            <person name="Parker A."/>
            <person name="Patel D."/>
            <person name="Pearce A.V."/>
            <person name="Peck A.I."/>
            <person name="Pelan S."/>
            <person name="Phelps K."/>
            <person name="Phillimore B.J."/>
            <person name="Plumb R."/>
            <person name="Rajan J."/>
            <person name="Raymond C."/>
            <person name="Rouse G."/>
            <person name="Saenphimmachak C."/>
            <person name="Sehra H.K."/>
            <person name="Sheridan E."/>
            <person name="Shownkeen R."/>
            <person name="Sims S."/>
            <person name="Skuce C.D."/>
            <person name="Smith M."/>
            <person name="Steward C."/>
            <person name="Subramanian S."/>
            <person name="Sycamore N."/>
            <person name="Tracey A."/>
            <person name="Tromans A."/>
            <person name="Van Helmond Z."/>
            <person name="Wall M."/>
            <person name="Wallis J.M."/>
            <person name="White S."/>
            <person name="Whitehead S.L."/>
            <person name="Wilkinson J.E."/>
            <person name="Willey D.L."/>
            <person name="Williams H."/>
            <person name="Wilming L."/>
            <person name="Wray P.W."/>
            <person name="Wu Z."/>
            <person name="Coulson A."/>
            <person name="Vaudin M."/>
            <person name="Sulston J.E."/>
            <person name="Durbin R.M."/>
            <person name="Hubbard T."/>
            <person name="Wooster R."/>
            <person name="Dunham I."/>
            <person name="Carter N.P."/>
            <person name="McVean G."/>
            <person name="Ross M.T."/>
            <person name="Harrow J."/>
            <person name="Olson M.V."/>
            <person name="Beck S."/>
            <person name="Rogers J."/>
            <person name="Bentley D.R."/>
        </authorList>
    </citation>
    <scope>NUCLEOTIDE SEQUENCE [LARGE SCALE GENOMIC DNA]</scope>
</reference>
<reference key="3">
    <citation type="journal article" date="2004" name="Genome Res.">
        <title>The status, quality, and expansion of the NIH full-length cDNA project: the Mammalian Gene Collection (MGC).</title>
        <authorList>
            <consortium name="The MGC Project Team"/>
        </authorList>
    </citation>
    <scope>NUCLEOTIDE SEQUENCE [LARGE SCALE MRNA] OF 1-744 (ISOFORM 1)</scope>
</reference>
<comment type="function">
    <text evidence="1">Essential sperm cell-surface protein required for sperm-egg fusion and fertilization.</text>
</comment>
<comment type="subunit">
    <text evidence="1">Interacts with DCST1.</text>
</comment>
<comment type="subcellular location">
    <subcellularLocation>
        <location evidence="1">Cytoplasmic vesicle</location>
        <location evidence="1">Secretory vesicle</location>
        <location evidence="1">Acrosome membrane</location>
        <topology evidence="2">Multi-pass membrane protein</topology>
    </subcellularLocation>
    <text evidence="1">Localizes in the anterior acrosome before the acrosome reaction and then translocates to the equatorial segment in acrosome-reacted sperm.</text>
</comment>
<comment type="alternative products">
    <event type="alternative splicing"/>
    <isoform>
        <id>Q5T1A1-1</id>
        <name>1</name>
        <sequence type="displayed"/>
    </isoform>
    <isoform>
        <id>Q5T1A1-2</id>
        <name>2</name>
        <sequence type="described" ref="VSP_023408 VSP_023409"/>
    </isoform>
</comment>
<comment type="sequence caution" evidence="5">
    <conflict type="frameshift">
        <sequence resource="EMBL-CDS" id="BAC05065"/>
    </conflict>
</comment>
<gene>
    <name type="primary">DCST2</name>
</gene>
<proteinExistence type="evidence at protein level"/>